<name>KCY_SHEB5</name>
<proteinExistence type="inferred from homology"/>
<protein>
    <recommendedName>
        <fullName evidence="1">Cytidylate kinase</fullName>
        <shortName evidence="1">CK</shortName>
        <ecNumber evidence="1">2.7.4.25</ecNumber>
    </recommendedName>
    <alternativeName>
        <fullName evidence="1">Cytidine monophosphate kinase</fullName>
        <shortName evidence="1">CMP kinase</shortName>
    </alternativeName>
</protein>
<organism>
    <name type="scientific">Shewanella baltica (strain OS155 / ATCC BAA-1091)</name>
    <dbReference type="NCBI Taxonomy" id="325240"/>
    <lineage>
        <taxon>Bacteria</taxon>
        <taxon>Pseudomonadati</taxon>
        <taxon>Pseudomonadota</taxon>
        <taxon>Gammaproteobacteria</taxon>
        <taxon>Alteromonadales</taxon>
        <taxon>Shewanellaceae</taxon>
        <taxon>Shewanella</taxon>
    </lineage>
</organism>
<sequence length="230" mass="25093">MSERAPVVTIDGPSGAGKGTISQLLAQHLGWQLLDSGAIYRVLALAAIHHNVELENEESITLLAAHLDVKFLTGNDTDPVQVILEGEDVTTDIRTQECSNAASKVAAFPRVREALLRRQRAFKTAPGLIADGRDMGTVVFPSAPAKLYLTASAEERAQRRYNQLQDKGFDVNIERLLSEIIERDDRDMNRPVAPLVPAEDALIIDTSGKGIDEVLALALNFINQKLSDTN</sequence>
<accession>A3D4A7</accession>
<keyword id="KW-0067">ATP-binding</keyword>
<keyword id="KW-0963">Cytoplasm</keyword>
<keyword id="KW-0418">Kinase</keyword>
<keyword id="KW-0547">Nucleotide-binding</keyword>
<keyword id="KW-1185">Reference proteome</keyword>
<keyword id="KW-0808">Transferase</keyword>
<gene>
    <name evidence="1" type="primary">cmk</name>
    <name type="ordered locus">Sbal_2069</name>
</gene>
<evidence type="ECO:0000255" key="1">
    <source>
        <dbReference type="HAMAP-Rule" id="MF_00238"/>
    </source>
</evidence>
<reference key="1">
    <citation type="submission" date="2007-02" db="EMBL/GenBank/DDBJ databases">
        <title>Complete sequence of chromosome of Shewanella baltica OS155.</title>
        <authorList>
            <consortium name="US DOE Joint Genome Institute"/>
            <person name="Copeland A."/>
            <person name="Lucas S."/>
            <person name="Lapidus A."/>
            <person name="Barry K."/>
            <person name="Detter J.C."/>
            <person name="Glavina del Rio T."/>
            <person name="Hammon N."/>
            <person name="Israni S."/>
            <person name="Dalin E."/>
            <person name="Tice H."/>
            <person name="Pitluck S."/>
            <person name="Sims D.R."/>
            <person name="Brettin T."/>
            <person name="Bruce D."/>
            <person name="Han C."/>
            <person name="Tapia R."/>
            <person name="Brainard J."/>
            <person name="Schmutz J."/>
            <person name="Larimer F."/>
            <person name="Land M."/>
            <person name="Hauser L."/>
            <person name="Kyrpides N."/>
            <person name="Mikhailova N."/>
            <person name="Brettar I."/>
            <person name="Klappenbach J."/>
            <person name="Konstantinidis K."/>
            <person name="Rodrigues J."/>
            <person name="Tiedje J."/>
            <person name="Richardson P."/>
        </authorList>
    </citation>
    <scope>NUCLEOTIDE SEQUENCE [LARGE SCALE GENOMIC DNA]</scope>
    <source>
        <strain>OS155 / ATCC BAA-1091</strain>
    </source>
</reference>
<comment type="catalytic activity">
    <reaction evidence="1">
        <text>CMP + ATP = CDP + ADP</text>
        <dbReference type="Rhea" id="RHEA:11600"/>
        <dbReference type="ChEBI" id="CHEBI:30616"/>
        <dbReference type="ChEBI" id="CHEBI:58069"/>
        <dbReference type="ChEBI" id="CHEBI:60377"/>
        <dbReference type="ChEBI" id="CHEBI:456216"/>
        <dbReference type="EC" id="2.7.4.25"/>
    </reaction>
</comment>
<comment type="catalytic activity">
    <reaction evidence="1">
        <text>dCMP + ATP = dCDP + ADP</text>
        <dbReference type="Rhea" id="RHEA:25094"/>
        <dbReference type="ChEBI" id="CHEBI:30616"/>
        <dbReference type="ChEBI" id="CHEBI:57566"/>
        <dbReference type="ChEBI" id="CHEBI:58593"/>
        <dbReference type="ChEBI" id="CHEBI:456216"/>
        <dbReference type="EC" id="2.7.4.25"/>
    </reaction>
</comment>
<comment type="subcellular location">
    <subcellularLocation>
        <location evidence="1">Cytoplasm</location>
    </subcellularLocation>
</comment>
<comment type="similarity">
    <text evidence="1">Belongs to the cytidylate kinase family. Type 1 subfamily.</text>
</comment>
<dbReference type="EC" id="2.7.4.25" evidence="1"/>
<dbReference type="EMBL" id="CP000563">
    <property type="protein sequence ID" value="ABN61570.1"/>
    <property type="molecule type" value="Genomic_DNA"/>
</dbReference>
<dbReference type="RefSeq" id="WP_006081720.1">
    <property type="nucleotide sequence ID" value="NC_009052.1"/>
</dbReference>
<dbReference type="SMR" id="A3D4A7"/>
<dbReference type="STRING" id="325240.Sbal_2069"/>
<dbReference type="GeneID" id="11772514"/>
<dbReference type="KEGG" id="sbl:Sbal_2069"/>
<dbReference type="HOGENOM" id="CLU_079959_2_0_6"/>
<dbReference type="OrthoDB" id="9807434at2"/>
<dbReference type="Proteomes" id="UP000001557">
    <property type="component" value="Chromosome"/>
</dbReference>
<dbReference type="GO" id="GO:0005829">
    <property type="term" value="C:cytosol"/>
    <property type="evidence" value="ECO:0007669"/>
    <property type="project" value="TreeGrafter"/>
</dbReference>
<dbReference type="GO" id="GO:0005524">
    <property type="term" value="F:ATP binding"/>
    <property type="evidence" value="ECO:0007669"/>
    <property type="project" value="UniProtKB-UniRule"/>
</dbReference>
<dbReference type="GO" id="GO:0036430">
    <property type="term" value="F:CMP kinase activity"/>
    <property type="evidence" value="ECO:0007669"/>
    <property type="project" value="RHEA"/>
</dbReference>
<dbReference type="GO" id="GO:0036431">
    <property type="term" value="F:dCMP kinase activity"/>
    <property type="evidence" value="ECO:0007669"/>
    <property type="project" value="RHEA"/>
</dbReference>
<dbReference type="GO" id="GO:0015949">
    <property type="term" value="P:nucleobase-containing small molecule interconversion"/>
    <property type="evidence" value="ECO:0007669"/>
    <property type="project" value="TreeGrafter"/>
</dbReference>
<dbReference type="GO" id="GO:0006220">
    <property type="term" value="P:pyrimidine nucleotide metabolic process"/>
    <property type="evidence" value="ECO:0007669"/>
    <property type="project" value="UniProtKB-UniRule"/>
</dbReference>
<dbReference type="CDD" id="cd02020">
    <property type="entry name" value="CMPK"/>
    <property type="match status" value="1"/>
</dbReference>
<dbReference type="FunFam" id="3.40.50.300:FF:000262">
    <property type="entry name" value="Cytidylate kinase"/>
    <property type="match status" value="1"/>
</dbReference>
<dbReference type="Gene3D" id="3.40.50.300">
    <property type="entry name" value="P-loop containing nucleotide triphosphate hydrolases"/>
    <property type="match status" value="1"/>
</dbReference>
<dbReference type="HAMAP" id="MF_00238">
    <property type="entry name" value="Cytidyl_kinase_type1"/>
    <property type="match status" value="1"/>
</dbReference>
<dbReference type="InterPro" id="IPR003136">
    <property type="entry name" value="Cytidylate_kin"/>
</dbReference>
<dbReference type="InterPro" id="IPR011994">
    <property type="entry name" value="Cytidylate_kinase_dom"/>
</dbReference>
<dbReference type="InterPro" id="IPR027417">
    <property type="entry name" value="P-loop_NTPase"/>
</dbReference>
<dbReference type="NCBIfam" id="TIGR00017">
    <property type="entry name" value="cmk"/>
    <property type="match status" value="1"/>
</dbReference>
<dbReference type="PANTHER" id="PTHR21299:SF2">
    <property type="entry name" value="CYTIDYLATE KINASE"/>
    <property type="match status" value="1"/>
</dbReference>
<dbReference type="PANTHER" id="PTHR21299">
    <property type="entry name" value="CYTIDYLATE KINASE/PANTOATE-BETA-ALANINE LIGASE"/>
    <property type="match status" value="1"/>
</dbReference>
<dbReference type="Pfam" id="PF02224">
    <property type="entry name" value="Cytidylate_kin"/>
    <property type="match status" value="1"/>
</dbReference>
<dbReference type="SUPFAM" id="SSF52540">
    <property type="entry name" value="P-loop containing nucleoside triphosphate hydrolases"/>
    <property type="match status" value="1"/>
</dbReference>
<feature type="chain" id="PRO_1000048272" description="Cytidylate kinase">
    <location>
        <begin position="1"/>
        <end position="230"/>
    </location>
</feature>
<feature type="binding site" evidence="1">
    <location>
        <begin position="12"/>
        <end position="20"/>
    </location>
    <ligand>
        <name>ATP</name>
        <dbReference type="ChEBI" id="CHEBI:30616"/>
    </ligand>
</feature>